<name>YDIB_SHIDS</name>
<proteinExistence type="inferred from homology"/>
<comment type="function">
    <text evidence="1">The actual biological function of YdiB remains unclear, nor is it known whether 3-dehydroshikimate or quinate represents the natural substrate. Catalyzes the reversible NAD-dependent reduction of both 3-dehydroshikimate (DHSA) and 3-dehydroquinate to yield shikimate (SA) and quinate, respectively. It can use both NAD or NADP for catalysis, however it has higher catalytic efficiency with NAD.</text>
</comment>
<comment type="catalytic activity">
    <reaction evidence="1">
        <text>L-quinate + NAD(+) = 3-dehydroquinate + NADH + H(+)</text>
        <dbReference type="Rhea" id="RHEA:22364"/>
        <dbReference type="ChEBI" id="CHEBI:15378"/>
        <dbReference type="ChEBI" id="CHEBI:29751"/>
        <dbReference type="ChEBI" id="CHEBI:32364"/>
        <dbReference type="ChEBI" id="CHEBI:57540"/>
        <dbReference type="ChEBI" id="CHEBI:57945"/>
        <dbReference type="EC" id="1.1.1.282"/>
    </reaction>
</comment>
<comment type="catalytic activity">
    <reaction evidence="1">
        <text>L-quinate + NADP(+) = 3-dehydroquinate + NADPH + H(+)</text>
        <dbReference type="Rhea" id="RHEA:18425"/>
        <dbReference type="ChEBI" id="CHEBI:15378"/>
        <dbReference type="ChEBI" id="CHEBI:29751"/>
        <dbReference type="ChEBI" id="CHEBI:32364"/>
        <dbReference type="ChEBI" id="CHEBI:57783"/>
        <dbReference type="ChEBI" id="CHEBI:58349"/>
        <dbReference type="EC" id="1.1.1.282"/>
    </reaction>
</comment>
<comment type="catalytic activity">
    <reaction evidence="1">
        <text>shikimate + NADP(+) = 3-dehydroshikimate + NADPH + H(+)</text>
        <dbReference type="Rhea" id="RHEA:17737"/>
        <dbReference type="ChEBI" id="CHEBI:15378"/>
        <dbReference type="ChEBI" id="CHEBI:16630"/>
        <dbReference type="ChEBI" id="CHEBI:36208"/>
        <dbReference type="ChEBI" id="CHEBI:57783"/>
        <dbReference type="ChEBI" id="CHEBI:58349"/>
        <dbReference type="EC" id="1.1.1.282"/>
    </reaction>
</comment>
<comment type="catalytic activity">
    <reaction evidence="1">
        <text>shikimate + NAD(+) = 3-dehydroshikimate + NADH + H(+)</text>
        <dbReference type="Rhea" id="RHEA:17741"/>
        <dbReference type="ChEBI" id="CHEBI:15378"/>
        <dbReference type="ChEBI" id="CHEBI:16630"/>
        <dbReference type="ChEBI" id="CHEBI:36208"/>
        <dbReference type="ChEBI" id="CHEBI:57540"/>
        <dbReference type="ChEBI" id="CHEBI:57945"/>
        <dbReference type="EC" id="1.1.1.282"/>
    </reaction>
</comment>
<comment type="pathway">
    <text evidence="1">Metabolic intermediate biosynthesis; chorismate biosynthesis; chorismate from D-erythrose 4-phosphate and phosphoenolpyruvate: step 4/7.</text>
</comment>
<comment type="subunit">
    <text evidence="1">Homodimer.</text>
</comment>
<comment type="similarity">
    <text evidence="1">Belongs to the shikimate dehydrogenase family.</text>
</comment>
<gene>
    <name evidence="1" type="primary">ydiB</name>
    <name type="ordered locus">SDY_1475</name>
</gene>
<evidence type="ECO:0000255" key="1">
    <source>
        <dbReference type="HAMAP-Rule" id="MF_01578"/>
    </source>
</evidence>
<dbReference type="EC" id="1.1.1.282" evidence="1"/>
<dbReference type="EMBL" id="CP000034">
    <property type="protein sequence ID" value="ABB61614.1"/>
    <property type="molecule type" value="Genomic_DNA"/>
</dbReference>
<dbReference type="RefSeq" id="WP_000798754.1">
    <property type="nucleotide sequence ID" value="NC_007606.1"/>
</dbReference>
<dbReference type="RefSeq" id="YP_403105.1">
    <property type="nucleotide sequence ID" value="NC_007606.1"/>
</dbReference>
<dbReference type="SMR" id="Q32GE1"/>
<dbReference type="STRING" id="300267.SDY_1475"/>
<dbReference type="EnsemblBacteria" id="ABB61614">
    <property type="protein sequence ID" value="ABB61614"/>
    <property type="gene ID" value="SDY_1475"/>
</dbReference>
<dbReference type="KEGG" id="sdy:SDY_1475"/>
<dbReference type="PATRIC" id="fig|300267.13.peg.1759"/>
<dbReference type="HOGENOM" id="CLU_044063_4_4_6"/>
<dbReference type="UniPathway" id="UPA00053">
    <property type="reaction ID" value="UER00087"/>
</dbReference>
<dbReference type="Proteomes" id="UP000002716">
    <property type="component" value="Chromosome"/>
</dbReference>
<dbReference type="GO" id="GO:0030266">
    <property type="term" value="F:quinate 3-dehydrogenase (NAD+) activity"/>
    <property type="evidence" value="ECO:0007669"/>
    <property type="project" value="UniProtKB-UniRule"/>
</dbReference>
<dbReference type="GO" id="GO:0052733">
    <property type="term" value="F:quinate 3-dehydrogenase (NADP+) activity"/>
    <property type="evidence" value="ECO:0007669"/>
    <property type="project" value="InterPro"/>
</dbReference>
<dbReference type="GO" id="GO:0052734">
    <property type="term" value="F:shikimate 3-dehydrogenase (NAD+) activity"/>
    <property type="evidence" value="ECO:0007669"/>
    <property type="project" value="InterPro"/>
</dbReference>
<dbReference type="GO" id="GO:0004764">
    <property type="term" value="F:shikimate 3-dehydrogenase (NADP+) activity"/>
    <property type="evidence" value="ECO:0007669"/>
    <property type="project" value="UniProtKB-UniRule"/>
</dbReference>
<dbReference type="GO" id="GO:0008652">
    <property type="term" value="P:amino acid biosynthetic process"/>
    <property type="evidence" value="ECO:0007669"/>
    <property type="project" value="UniProtKB-KW"/>
</dbReference>
<dbReference type="GO" id="GO:0009073">
    <property type="term" value="P:aromatic amino acid family biosynthetic process"/>
    <property type="evidence" value="ECO:0007669"/>
    <property type="project" value="UniProtKB-KW"/>
</dbReference>
<dbReference type="GO" id="GO:0009423">
    <property type="term" value="P:chorismate biosynthetic process"/>
    <property type="evidence" value="ECO:0007669"/>
    <property type="project" value="UniProtKB-UniRule"/>
</dbReference>
<dbReference type="GO" id="GO:0019632">
    <property type="term" value="P:shikimate metabolic process"/>
    <property type="evidence" value="ECO:0007669"/>
    <property type="project" value="TreeGrafter"/>
</dbReference>
<dbReference type="CDD" id="cd01065">
    <property type="entry name" value="NAD_bind_Shikimate_DH"/>
    <property type="match status" value="1"/>
</dbReference>
<dbReference type="FunFam" id="3.40.50.10860:FF:000004">
    <property type="entry name" value="Quinate/shikimate dehydrogenase"/>
    <property type="match status" value="1"/>
</dbReference>
<dbReference type="FunFam" id="3.40.50.720:FF:000086">
    <property type="entry name" value="Quinate/shikimate dehydrogenase"/>
    <property type="match status" value="1"/>
</dbReference>
<dbReference type="Gene3D" id="3.40.50.10860">
    <property type="entry name" value="Leucine Dehydrogenase, chain A, domain 1"/>
    <property type="match status" value="1"/>
</dbReference>
<dbReference type="Gene3D" id="3.40.50.720">
    <property type="entry name" value="NAD(P)-binding Rossmann-like Domain"/>
    <property type="match status" value="1"/>
</dbReference>
<dbReference type="HAMAP" id="MF_00222">
    <property type="entry name" value="Shikimate_DH_AroE"/>
    <property type="match status" value="1"/>
</dbReference>
<dbReference type="HAMAP" id="MF_01578">
    <property type="entry name" value="Shikimate_DH_YdiB"/>
    <property type="match status" value="1"/>
</dbReference>
<dbReference type="InterPro" id="IPR046346">
    <property type="entry name" value="Aminoacid_DH-like_N_sf"/>
</dbReference>
<dbReference type="InterPro" id="IPR036291">
    <property type="entry name" value="NAD(P)-bd_dom_sf"/>
</dbReference>
<dbReference type="InterPro" id="IPR022872">
    <property type="entry name" value="Quinate/Shikimate_DH"/>
</dbReference>
<dbReference type="InterPro" id="IPR041121">
    <property type="entry name" value="SDH_C"/>
</dbReference>
<dbReference type="InterPro" id="IPR013708">
    <property type="entry name" value="Shikimate_DH-bd_N"/>
</dbReference>
<dbReference type="InterPro" id="IPR022893">
    <property type="entry name" value="Shikimate_DH_fam"/>
</dbReference>
<dbReference type="NCBIfam" id="NF009390">
    <property type="entry name" value="PRK12749.1"/>
    <property type="match status" value="1"/>
</dbReference>
<dbReference type="PANTHER" id="PTHR21089:SF1">
    <property type="entry name" value="BIFUNCTIONAL 3-DEHYDROQUINATE DEHYDRATASE_SHIKIMATE DEHYDROGENASE, CHLOROPLASTIC"/>
    <property type="match status" value="1"/>
</dbReference>
<dbReference type="PANTHER" id="PTHR21089">
    <property type="entry name" value="SHIKIMATE DEHYDROGENASE"/>
    <property type="match status" value="1"/>
</dbReference>
<dbReference type="Pfam" id="PF18317">
    <property type="entry name" value="SDH_C"/>
    <property type="match status" value="1"/>
</dbReference>
<dbReference type="Pfam" id="PF08501">
    <property type="entry name" value="Shikimate_dh_N"/>
    <property type="match status" value="1"/>
</dbReference>
<dbReference type="SUPFAM" id="SSF53223">
    <property type="entry name" value="Aminoacid dehydrogenase-like, N-terminal domain"/>
    <property type="match status" value="1"/>
</dbReference>
<dbReference type="SUPFAM" id="SSF51735">
    <property type="entry name" value="NAD(P)-binding Rossmann-fold domains"/>
    <property type="match status" value="1"/>
</dbReference>
<sequence length="297" mass="32390">MKNTCSTNWKHHPAKYELIGLMAYPIRHSLSPEMQNKALEKAGLPFTYMAFEVDNDSFPGAIEGLKALKMRGTGVSMPNKQLACEYVDELTPAAKLVGAINTIVNDDGYLRGYNTDGTGHIRAIKESGFDIKGKTMVLLGAGGASTAIGAQGAIEGLKEIKLFNRRDEFFDKALAFAQRVNENTDCVVTVTDLADQQAFAEALASDDILTNGTKVGMKPLENKSLVNDISLLHPGLLVTECVYNPHMTKLLQQAQQAGCKTIDGYGMLLWQGAEQFTLWTGKDFPLEYVKQVMGFGA</sequence>
<feature type="chain" id="PRO_0000280776" description="Quinate/shikimate dehydrogenase">
    <location>
        <begin position="1"/>
        <end position="297"/>
    </location>
</feature>
<feature type="binding site" evidence="1">
    <location>
        <position position="80"/>
    </location>
    <ligand>
        <name>substrate</name>
    </ligand>
</feature>
<feature type="binding site" evidence="1">
    <location>
        <position position="116"/>
    </location>
    <ligand>
        <name>substrate</name>
    </ligand>
</feature>
<feature type="binding site" evidence="1">
    <location>
        <begin position="141"/>
        <end position="144"/>
    </location>
    <ligand>
        <name>NAD(+)</name>
        <dbReference type="ChEBI" id="CHEBI:57540"/>
    </ligand>
</feature>
<feature type="binding site" evidence="1">
    <location>
        <begin position="164"/>
        <end position="167"/>
    </location>
    <ligand>
        <name>NAD(+)</name>
        <dbReference type="ChEBI" id="CHEBI:57540"/>
    </ligand>
</feature>
<feature type="binding site" evidence="1">
    <location>
        <position position="214"/>
    </location>
    <ligand>
        <name>NAD(+)</name>
        <dbReference type="ChEBI" id="CHEBI:57540"/>
    </ligand>
</feature>
<feature type="binding site" evidence="1">
    <location>
        <begin position="241"/>
        <end position="244"/>
    </location>
    <ligand>
        <name>NAD(+)</name>
        <dbReference type="ChEBI" id="CHEBI:57540"/>
    </ligand>
</feature>
<feature type="binding site" evidence="1">
    <location>
        <position position="264"/>
    </location>
    <ligand>
        <name>NAD(+)</name>
        <dbReference type="ChEBI" id="CHEBI:57540"/>
    </ligand>
</feature>
<reference key="1">
    <citation type="journal article" date="2005" name="Nucleic Acids Res.">
        <title>Genome dynamics and diversity of Shigella species, the etiologic agents of bacillary dysentery.</title>
        <authorList>
            <person name="Yang F."/>
            <person name="Yang J."/>
            <person name="Zhang X."/>
            <person name="Chen L."/>
            <person name="Jiang Y."/>
            <person name="Yan Y."/>
            <person name="Tang X."/>
            <person name="Wang J."/>
            <person name="Xiong Z."/>
            <person name="Dong J."/>
            <person name="Xue Y."/>
            <person name="Zhu Y."/>
            <person name="Xu X."/>
            <person name="Sun L."/>
            <person name="Chen S."/>
            <person name="Nie H."/>
            <person name="Peng J."/>
            <person name="Xu J."/>
            <person name="Wang Y."/>
            <person name="Yuan Z."/>
            <person name="Wen Y."/>
            <person name="Yao Z."/>
            <person name="Shen Y."/>
            <person name="Qiang B."/>
            <person name="Hou Y."/>
            <person name="Yu J."/>
            <person name="Jin Q."/>
        </authorList>
    </citation>
    <scope>NUCLEOTIDE SEQUENCE [LARGE SCALE GENOMIC DNA]</scope>
    <source>
        <strain>Sd197</strain>
    </source>
</reference>
<accession>Q32GE1</accession>
<protein>
    <recommendedName>
        <fullName evidence="1">Quinate/shikimate dehydrogenase</fullName>
        <ecNumber evidence="1">1.1.1.282</ecNumber>
    </recommendedName>
    <alternativeName>
        <fullName evidence="1">NAD-dependent shikimate 5-dehydrogenase</fullName>
    </alternativeName>
</protein>
<organism>
    <name type="scientific">Shigella dysenteriae serotype 1 (strain Sd197)</name>
    <dbReference type="NCBI Taxonomy" id="300267"/>
    <lineage>
        <taxon>Bacteria</taxon>
        <taxon>Pseudomonadati</taxon>
        <taxon>Pseudomonadota</taxon>
        <taxon>Gammaproteobacteria</taxon>
        <taxon>Enterobacterales</taxon>
        <taxon>Enterobacteriaceae</taxon>
        <taxon>Shigella</taxon>
    </lineage>
</organism>
<keyword id="KW-0028">Amino-acid biosynthesis</keyword>
<keyword id="KW-0057">Aromatic amino acid biosynthesis</keyword>
<keyword id="KW-0520">NAD</keyword>
<keyword id="KW-0521">NADP</keyword>
<keyword id="KW-0560">Oxidoreductase</keyword>
<keyword id="KW-1185">Reference proteome</keyword>